<keyword id="KW-0165">Cleavage on pair of basic residues</keyword>
<keyword id="KW-0217">Developmental protein</keyword>
<keyword id="KW-1015">Disulfide bond</keyword>
<keyword id="KW-0325">Glycoprotein</keyword>
<keyword id="KW-0339">Growth factor</keyword>
<keyword id="KW-0497">Mitogen</keyword>
<keyword id="KW-0656">Proto-oncogene</keyword>
<keyword id="KW-1185">Reference proteome</keyword>
<keyword id="KW-0964">Secreted</keyword>
<keyword id="KW-0732">Signal</keyword>
<name>PDGFB_MOUSE</name>
<gene>
    <name type="primary">Pdgfb</name>
    <name type="synonym">Sis</name>
</gene>
<feature type="signal peptide" evidence="1">
    <location>
        <begin position="1"/>
        <end position="20"/>
    </location>
</feature>
<feature type="propeptide" id="PRO_0000023374" description="Removed in mature form" evidence="1">
    <location>
        <begin position="21"/>
        <end position="81"/>
    </location>
</feature>
<feature type="chain" id="PRO_0000023375" description="Platelet-derived growth factor subunit B">
    <location>
        <begin position="82"/>
        <end position="190"/>
    </location>
</feature>
<feature type="propeptide" id="PRO_0000023376" description="Removed in mature form" evidence="1">
    <location>
        <begin position="191"/>
        <end position="241"/>
    </location>
</feature>
<feature type="region of interest" description="Disordered" evidence="4">
    <location>
        <begin position="217"/>
        <end position="241"/>
    </location>
</feature>
<feature type="compositionally biased region" description="Basic residues" evidence="4">
    <location>
        <begin position="217"/>
        <end position="230"/>
    </location>
</feature>
<feature type="site" description="Involved in receptor binding">
    <location>
        <position position="108"/>
    </location>
</feature>
<feature type="site" description="Involved in receptor binding">
    <location>
        <position position="111"/>
    </location>
</feature>
<feature type="glycosylation site" description="N-linked (GlcNAc...) asparagine" evidence="3">
    <location>
        <position position="63"/>
    </location>
</feature>
<feature type="disulfide bond" evidence="1">
    <location>
        <begin position="97"/>
        <end position="141"/>
    </location>
</feature>
<feature type="disulfide bond" description="Interchain" evidence="1">
    <location>
        <position position="124"/>
    </location>
</feature>
<feature type="disulfide bond" evidence="1">
    <location>
        <begin position="130"/>
        <end position="178"/>
    </location>
</feature>
<feature type="disulfide bond" description="Interchain" evidence="1">
    <location>
        <position position="133"/>
    </location>
</feature>
<feature type="disulfide bond" evidence="1">
    <location>
        <begin position="134"/>
        <end position="180"/>
    </location>
</feature>
<feature type="sequence conflict" description="In Ref. 2; AAH53430/AAH64056." evidence="13" ref="2">
    <original>I</original>
    <variation>V</variation>
    <location>
        <position position="183"/>
    </location>
</feature>
<organism>
    <name type="scientific">Mus musculus</name>
    <name type="common">Mouse</name>
    <dbReference type="NCBI Taxonomy" id="10090"/>
    <lineage>
        <taxon>Eukaryota</taxon>
        <taxon>Metazoa</taxon>
        <taxon>Chordata</taxon>
        <taxon>Craniata</taxon>
        <taxon>Vertebrata</taxon>
        <taxon>Euteleostomi</taxon>
        <taxon>Mammalia</taxon>
        <taxon>Eutheria</taxon>
        <taxon>Euarchontoglires</taxon>
        <taxon>Glires</taxon>
        <taxon>Rodentia</taxon>
        <taxon>Myomorpha</taxon>
        <taxon>Muroidea</taxon>
        <taxon>Muridae</taxon>
        <taxon>Murinae</taxon>
        <taxon>Mus</taxon>
        <taxon>Mus</taxon>
    </lineage>
</organism>
<reference key="1">
    <citation type="journal article" date="1991" name="Genomics">
        <title>Structure of the murine c-sis proto-oncogene (Sis, PDGFB) encoding the B chain of platelet-derived growth factor.</title>
        <authorList>
            <person name="Bonthron D.T."/>
            <person name="Sultan P."/>
            <person name="Collins T."/>
        </authorList>
    </citation>
    <scope>NUCLEOTIDE SEQUENCE [GENOMIC DNA]</scope>
</reference>
<reference key="2">
    <citation type="journal article" date="2004" name="Genome Res.">
        <title>The status, quality, and expansion of the NIH full-length cDNA project: the Mammalian Gene Collection (MGC).</title>
        <authorList>
            <consortium name="The MGC Project Team"/>
        </authorList>
    </citation>
    <scope>NUCLEOTIDE SEQUENCE [LARGE SCALE MRNA]</scope>
    <source>
        <strain>C57BL/6J</strain>
        <tissue>Embryo</tissue>
        <tissue>Mammary gland</tissue>
    </source>
</reference>
<reference key="3">
    <citation type="journal article" date="1994" name="Genes Dev.">
        <title>Mice deficient for PDGF B show renal, cardiovascular, and hematological abnormalities.</title>
        <authorList>
            <person name="Leveen P."/>
            <person name="Pekny M."/>
            <person name="Gebre-Medhin S."/>
            <person name="Swolin B."/>
            <person name="Larsson E."/>
            <person name="Betsholtz C."/>
        </authorList>
    </citation>
    <scope>DISRUPTION PHENOTYPE</scope>
    <scope>FUNCTION</scope>
</reference>
<reference key="4">
    <citation type="journal article" date="1997" name="Science">
        <title>Pericyte loss and microaneurysm formation in PDGF-B-deficient mice.</title>
        <authorList>
            <person name="Lindahl P."/>
            <person name="Johansson B.R."/>
            <person name="Leveen P."/>
            <person name="Betsholtz C."/>
        </authorList>
    </citation>
    <scope>DISRUPTION PHENOTYPE</scope>
</reference>
<reference key="5">
    <citation type="journal article" date="2000" name="J. Biol. Chem.">
        <title>Platelet-derived growth factor receptor beta regulates migration and DNA synthesis in metanephric mesenchymal cells.</title>
        <authorList>
            <person name="Arar M."/>
            <person name="Xu Y.C."/>
            <person name="Elshihabi I."/>
            <person name="Barnes J.L."/>
            <person name="Choudhury G.G."/>
            <person name="Abboud H.E."/>
        </authorList>
    </citation>
    <scope>FUNCTION</scope>
</reference>
<reference key="6">
    <citation type="journal article" date="2001" name="Blood">
        <title>Basis of hematopoietic defects in platelet-derived growth factor (PDGF)-B and PDGF beta-receptor null mice.</title>
        <authorList>
            <person name="Kaminski W.E."/>
            <person name="Lindahl P."/>
            <person name="Lin N.L."/>
            <person name="Broudy V.C."/>
            <person name="Crosby J.R."/>
            <person name="Hellstrom M."/>
            <person name="Swolin B."/>
            <person name="Bowen-Pope D.F."/>
            <person name="Martin P.J."/>
            <person name="Ross R."/>
            <person name="Betsholtz C."/>
            <person name="Raines E.W."/>
        </authorList>
    </citation>
    <scope>DISRUPTION PHENOTYPE</scope>
</reference>
<reference key="7">
    <citation type="journal article" date="2003" name="J. Am. Soc. Nephrol.">
        <title>Obstructive uropathy in mice and humans: potential role for PDGF-D in the progression of tubulointerstitial injury.</title>
        <authorList>
            <person name="Taneda S."/>
            <person name="Hudkins K.L."/>
            <person name="Topouzis S."/>
            <person name="Gilbertson D.G."/>
            <person name="Ophascharoensuk V."/>
            <person name="Truong L."/>
            <person name="Johnson R.J."/>
            <person name="Alpers C.E."/>
        </authorList>
    </citation>
    <scope>TISSUE SPECIFICITY</scope>
</reference>
<reference key="8">
    <citation type="journal article" date="2003" name="J. Clin. Invest.">
        <title>Endothelial and nonendothelial sources of PDGF-B regulate pericyte recruitment and influence vascular pattern formation in tumors.</title>
        <authorList>
            <person name="Abramsson A."/>
            <person name="Lindblom P."/>
            <person name="Betsholtz C."/>
        </authorList>
    </citation>
    <scope>FUNCTION</scope>
</reference>
<reference key="9">
    <citation type="journal article" date="2004" name="Cytokine Growth Factor Rev.">
        <title>PDGF signaling in cells and mice.</title>
        <authorList>
            <person name="Tallquist M."/>
            <person name="Kazlauskas A."/>
        </authorList>
    </citation>
    <scope>REVIEW</scope>
</reference>
<reference key="10">
    <citation type="journal article" date="2004" name="Cytokine Growth Factor Rev.">
        <title>Insight into the physiological functions of PDGF through genetic studies in mice.</title>
        <authorList>
            <person name="Betsholtz C."/>
        </authorList>
    </citation>
    <scope>REVIEW ON FUNCTION</scope>
    <scope>DISRUPTION PHENOTYPE</scope>
</reference>
<reference key="11">
    <citation type="journal article" date="2008" name="PLoS ONE">
        <title>Comprehensive dissection of PDGF-PDGFR signaling pathways in PDGFR genetically defined cells.</title>
        <authorList>
            <person name="Wu E."/>
            <person name="Palmer N."/>
            <person name="Tian Z."/>
            <person name="Moseman A.P."/>
            <person name="Galdzicki M."/>
            <person name="Wang X."/>
            <person name="Berger B."/>
            <person name="Zhang H."/>
            <person name="Kohane I.S."/>
        </authorList>
    </citation>
    <scope>FUNCTION</scope>
</reference>
<evidence type="ECO:0000250" key="1"/>
<evidence type="ECO:0000250" key="2">
    <source>
        <dbReference type="UniProtKB" id="P01127"/>
    </source>
</evidence>
<evidence type="ECO:0000255" key="3"/>
<evidence type="ECO:0000256" key="4">
    <source>
        <dbReference type="SAM" id="MobiDB-lite"/>
    </source>
</evidence>
<evidence type="ECO:0000269" key="5">
    <source>
    </source>
</evidence>
<evidence type="ECO:0000269" key="6">
    <source>
    </source>
</evidence>
<evidence type="ECO:0000269" key="7">
    <source>
    </source>
</evidence>
<evidence type="ECO:0000269" key="8">
    <source>
    </source>
</evidence>
<evidence type="ECO:0000269" key="9">
    <source>
    </source>
</evidence>
<evidence type="ECO:0000269" key="10">
    <source>
    </source>
</evidence>
<evidence type="ECO:0000269" key="11">
    <source>
    </source>
</evidence>
<evidence type="ECO:0000269" key="12">
    <source>
    </source>
</evidence>
<evidence type="ECO:0000305" key="13"/>
<accession>P31240</accession>
<accession>Q6P3C4</accession>
<protein>
    <recommendedName>
        <fullName>Platelet-derived growth factor subunit B</fullName>
        <shortName>PDGF subunit B</shortName>
    </recommendedName>
    <alternativeName>
        <fullName>PDGF-2</fullName>
    </alternativeName>
    <alternativeName>
        <fullName>Platelet-derived growth factor B chain</fullName>
    </alternativeName>
    <alternativeName>
        <fullName>Platelet-derived growth factor beta polypeptide</fullName>
    </alternativeName>
    <alternativeName>
        <fullName>Proto-oncogene c-Sis</fullName>
    </alternativeName>
</protein>
<dbReference type="EMBL" id="M84453">
    <property type="protein sequence ID" value="AAA40113.1"/>
    <property type="molecule type" value="Genomic_DNA"/>
</dbReference>
<dbReference type="EMBL" id="M84448">
    <property type="protein sequence ID" value="AAA40113.1"/>
    <property type="status" value="JOINED"/>
    <property type="molecule type" value="Genomic_DNA"/>
</dbReference>
<dbReference type="EMBL" id="M84449">
    <property type="protein sequence ID" value="AAA40113.1"/>
    <property type="status" value="JOINED"/>
    <property type="molecule type" value="Genomic_DNA"/>
</dbReference>
<dbReference type="EMBL" id="M84450">
    <property type="protein sequence ID" value="AAA40113.1"/>
    <property type="status" value="JOINED"/>
    <property type="molecule type" value="Genomic_DNA"/>
</dbReference>
<dbReference type="EMBL" id="M84451">
    <property type="protein sequence ID" value="AAA40113.1"/>
    <property type="status" value="JOINED"/>
    <property type="molecule type" value="Genomic_DNA"/>
</dbReference>
<dbReference type="EMBL" id="M84452">
    <property type="protein sequence ID" value="AAA40113.1"/>
    <property type="status" value="JOINED"/>
    <property type="molecule type" value="Genomic_DNA"/>
</dbReference>
<dbReference type="EMBL" id="M64849">
    <property type="protein sequence ID" value="AAA37485.1"/>
    <property type="molecule type" value="Genomic_DNA"/>
</dbReference>
<dbReference type="EMBL" id="M64844">
    <property type="protein sequence ID" value="AAA37485.1"/>
    <property type="status" value="JOINED"/>
    <property type="molecule type" value="Genomic_DNA"/>
</dbReference>
<dbReference type="EMBL" id="M64845">
    <property type="protein sequence ID" value="AAA37485.1"/>
    <property type="status" value="JOINED"/>
    <property type="molecule type" value="Genomic_DNA"/>
</dbReference>
<dbReference type="EMBL" id="M64846">
    <property type="protein sequence ID" value="AAA37485.1"/>
    <property type="status" value="JOINED"/>
    <property type="molecule type" value="Genomic_DNA"/>
</dbReference>
<dbReference type="EMBL" id="M64847">
    <property type="protein sequence ID" value="AAA37485.1"/>
    <property type="status" value="JOINED"/>
    <property type="molecule type" value="Genomic_DNA"/>
</dbReference>
<dbReference type="EMBL" id="M64848">
    <property type="protein sequence ID" value="AAA37485.1"/>
    <property type="status" value="JOINED"/>
    <property type="molecule type" value="Genomic_DNA"/>
</dbReference>
<dbReference type="EMBL" id="BC053430">
    <property type="protein sequence ID" value="AAH53430.1"/>
    <property type="molecule type" value="mRNA"/>
</dbReference>
<dbReference type="EMBL" id="BC064056">
    <property type="protein sequence ID" value="AAH64056.1"/>
    <property type="molecule type" value="mRNA"/>
</dbReference>
<dbReference type="CCDS" id="CCDS27656.1"/>
<dbReference type="PIR" id="A39073">
    <property type="entry name" value="PFMSGB"/>
</dbReference>
<dbReference type="RefSeq" id="NP_035187.2">
    <property type="nucleotide sequence ID" value="NM_011057.3"/>
</dbReference>
<dbReference type="RefSeq" id="XP_017171991.1">
    <property type="nucleotide sequence ID" value="XM_017316502.1"/>
</dbReference>
<dbReference type="SMR" id="P31240"/>
<dbReference type="ComplexPortal" id="CPX-2900">
    <property type="entry name" value="Platelet-derived growth factor AB complex"/>
</dbReference>
<dbReference type="ComplexPortal" id="CPX-2901">
    <property type="entry name" value="PDGF receptor alpha - PDGF-AB complex"/>
</dbReference>
<dbReference type="ComplexPortal" id="CPX-2903">
    <property type="entry name" value="PDGF receptor alpha-beta - PDGF-AB complex"/>
</dbReference>
<dbReference type="ComplexPortal" id="CPX-2904">
    <property type="entry name" value="PDGF receptor beta - PDGF-AB complex"/>
</dbReference>
<dbReference type="ComplexPortal" id="CPX-2905">
    <property type="entry name" value="Platelet-derived growth factor BB complex"/>
</dbReference>
<dbReference type="ComplexPortal" id="CPX-2906">
    <property type="entry name" value="PDGF receptor alpha - PDGF-BB complex"/>
</dbReference>
<dbReference type="ComplexPortal" id="CPX-2907">
    <property type="entry name" value="PDGF receptor alpha-beta - PDGF-BB complex"/>
</dbReference>
<dbReference type="ComplexPortal" id="CPX-2908">
    <property type="entry name" value="PDGF receptor beta - PDGF-BB complex"/>
</dbReference>
<dbReference type="FunCoup" id="P31240">
    <property type="interactions" value="957"/>
</dbReference>
<dbReference type="IntAct" id="P31240">
    <property type="interactions" value="1"/>
</dbReference>
<dbReference type="STRING" id="10090.ENSMUSP00000000500"/>
<dbReference type="GlyCosmos" id="P31240">
    <property type="glycosylation" value="1 site, No reported glycans"/>
</dbReference>
<dbReference type="GlyGen" id="P31240">
    <property type="glycosylation" value="1 site, 1 N-linked glycan (1 site)"/>
</dbReference>
<dbReference type="iPTMnet" id="P31240"/>
<dbReference type="PhosphoSitePlus" id="P31240"/>
<dbReference type="PaxDb" id="10090-ENSMUSP00000000500"/>
<dbReference type="PeptideAtlas" id="P31240"/>
<dbReference type="ProteomicsDB" id="294045"/>
<dbReference type="DNASU" id="18591"/>
<dbReference type="GeneID" id="18591"/>
<dbReference type="KEGG" id="mmu:18591"/>
<dbReference type="UCSC" id="uc007wuz.1">
    <property type="organism name" value="mouse"/>
</dbReference>
<dbReference type="AGR" id="MGI:97528"/>
<dbReference type="CTD" id="5155"/>
<dbReference type="MGI" id="MGI:97528">
    <property type="gene designation" value="Pdgfb"/>
</dbReference>
<dbReference type="eggNOG" id="ENOG502S2VW">
    <property type="taxonomic scope" value="Eukaryota"/>
</dbReference>
<dbReference type="InParanoid" id="P31240"/>
<dbReference type="OrthoDB" id="8878063at2759"/>
<dbReference type="PhylomeDB" id="P31240"/>
<dbReference type="TreeFam" id="TF319554"/>
<dbReference type="Reactome" id="R-MMU-114608">
    <property type="pathway name" value="Platelet degranulation"/>
</dbReference>
<dbReference type="Reactome" id="R-MMU-1257604">
    <property type="pathway name" value="PIP3 activates AKT signaling"/>
</dbReference>
<dbReference type="Reactome" id="R-MMU-186763">
    <property type="pathway name" value="Downstream signal transduction"/>
</dbReference>
<dbReference type="Reactome" id="R-MMU-186797">
    <property type="pathway name" value="Signaling by PDGF"/>
</dbReference>
<dbReference type="Reactome" id="R-MMU-5673001">
    <property type="pathway name" value="RAF/MAP kinase cascade"/>
</dbReference>
<dbReference type="Reactome" id="R-MMU-6811558">
    <property type="pathway name" value="PI5P, PP2A and IER3 Regulate PI3K/AKT Signaling"/>
</dbReference>
<dbReference type="BioGRID-ORCS" id="18591">
    <property type="hits" value="0 hits in 77 CRISPR screens"/>
</dbReference>
<dbReference type="ChiTaRS" id="Pdgfb">
    <property type="organism name" value="mouse"/>
</dbReference>
<dbReference type="PRO" id="PR:P31240"/>
<dbReference type="Proteomes" id="UP000000589">
    <property type="component" value="Unplaced"/>
</dbReference>
<dbReference type="RNAct" id="P31240">
    <property type="molecule type" value="protein"/>
</dbReference>
<dbReference type="GO" id="GO:0016323">
    <property type="term" value="C:basolateral plasma membrane"/>
    <property type="evidence" value="ECO:0000250"/>
    <property type="project" value="UniProtKB"/>
</dbReference>
<dbReference type="GO" id="GO:0009986">
    <property type="term" value="C:cell surface"/>
    <property type="evidence" value="ECO:0000250"/>
    <property type="project" value="UniProtKB"/>
</dbReference>
<dbReference type="GO" id="GO:0005737">
    <property type="term" value="C:cytoplasm"/>
    <property type="evidence" value="ECO:0000250"/>
    <property type="project" value="UniProtKB"/>
</dbReference>
<dbReference type="GO" id="GO:0005576">
    <property type="term" value="C:extracellular region"/>
    <property type="evidence" value="ECO:0007669"/>
    <property type="project" value="UniProtKB-SubCell"/>
</dbReference>
<dbReference type="GO" id="GO:1990265">
    <property type="term" value="C:platelet-derived growth factor complex"/>
    <property type="evidence" value="ECO:0000266"/>
    <property type="project" value="ComplexPortal"/>
</dbReference>
<dbReference type="GO" id="GO:0005518">
    <property type="term" value="F:collagen binding"/>
    <property type="evidence" value="ECO:0000266"/>
    <property type="project" value="MGI"/>
</dbReference>
<dbReference type="GO" id="GO:0008083">
    <property type="term" value="F:growth factor activity"/>
    <property type="evidence" value="ECO:0000250"/>
    <property type="project" value="UniProtKB"/>
</dbReference>
<dbReference type="GO" id="GO:0005161">
    <property type="term" value="F:platelet-derived growth factor receptor binding"/>
    <property type="evidence" value="ECO:0000250"/>
    <property type="project" value="UniProtKB"/>
</dbReference>
<dbReference type="GO" id="GO:0042803">
    <property type="term" value="F:protein homodimerization activity"/>
    <property type="evidence" value="ECO:0000250"/>
    <property type="project" value="UniProtKB"/>
</dbReference>
<dbReference type="GO" id="GO:0016176">
    <property type="term" value="F:superoxide-generating NADPH oxidase activator activity"/>
    <property type="evidence" value="ECO:0000250"/>
    <property type="project" value="UniProtKB"/>
</dbReference>
<dbReference type="GO" id="GO:0030036">
    <property type="term" value="P:actin cytoskeleton organization"/>
    <property type="evidence" value="ECO:0000314"/>
    <property type="project" value="MGI"/>
</dbReference>
<dbReference type="GO" id="GO:0001568">
    <property type="term" value="P:blood vessel development"/>
    <property type="evidence" value="ECO:0000270"/>
    <property type="project" value="UniProtKB"/>
</dbReference>
<dbReference type="GO" id="GO:0048514">
    <property type="term" value="P:blood vessel morphogenesis"/>
    <property type="evidence" value="ECO:0000314"/>
    <property type="project" value="MGI"/>
</dbReference>
<dbReference type="GO" id="GO:0060445">
    <property type="term" value="P:branching involved in salivary gland morphogenesis"/>
    <property type="evidence" value="ECO:0000315"/>
    <property type="project" value="MGI"/>
</dbReference>
<dbReference type="GO" id="GO:0060947">
    <property type="term" value="P:cardiac vascular smooth muscle cell differentiation"/>
    <property type="evidence" value="ECO:0000304"/>
    <property type="project" value="DFLAT"/>
</dbReference>
<dbReference type="GO" id="GO:0060326">
    <property type="term" value="P:cell chemotaxis"/>
    <property type="evidence" value="ECO:0000250"/>
    <property type="project" value="UniProtKB"/>
</dbReference>
<dbReference type="GO" id="GO:0016477">
    <property type="term" value="P:cell migration"/>
    <property type="evidence" value="ECO:0000316"/>
    <property type="project" value="MGI"/>
</dbReference>
<dbReference type="GO" id="GO:0030031">
    <property type="term" value="P:cell projection assembly"/>
    <property type="evidence" value="ECO:0000314"/>
    <property type="project" value="MGI"/>
</dbReference>
<dbReference type="GO" id="GO:0071506">
    <property type="term" value="P:cellular response to mycophenolic acid"/>
    <property type="evidence" value="ECO:0000250"/>
    <property type="project" value="UniProtKB"/>
</dbReference>
<dbReference type="GO" id="GO:0036120">
    <property type="term" value="P:cellular response to platelet-derived growth factor stimulus"/>
    <property type="evidence" value="ECO:0000314"/>
    <property type="project" value="BHF-UCL"/>
</dbReference>
<dbReference type="GO" id="GO:0001892">
    <property type="term" value="P:embryonic placenta development"/>
    <property type="evidence" value="ECO:0000315"/>
    <property type="project" value="UniProtKB"/>
</dbReference>
<dbReference type="GO" id="GO:0001935">
    <property type="term" value="P:endothelial cell proliferation"/>
    <property type="evidence" value="ECO:0000316"/>
    <property type="project" value="MGI"/>
</dbReference>
<dbReference type="GO" id="GO:0060664">
    <property type="term" value="P:epithelial cell proliferation involved in salivary gland morphogenesis"/>
    <property type="evidence" value="ECO:0000315"/>
    <property type="project" value="MGI"/>
</dbReference>
<dbReference type="GO" id="GO:0042462">
    <property type="term" value="P:eye photoreceptor cell development"/>
    <property type="evidence" value="ECO:0000315"/>
    <property type="project" value="MGI"/>
</dbReference>
<dbReference type="GO" id="GO:0008543">
    <property type="term" value="P:fibroblast growth factor receptor signaling pathway"/>
    <property type="evidence" value="ECO:0000314"/>
    <property type="project" value="MGI"/>
</dbReference>
<dbReference type="GO" id="GO:0010761">
    <property type="term" value="P:fibroblast migration"/>
    <property type="evidence" value="ECO:0000314"/>
    <property type="project" value="MGI"/>
</dbReference>
<dbReference type="GO" id="GO:0021782">
    <property type="term" value="P:glial cell development"/>
    <property type="evidence" value="ECO:0000315"/>
    <property type="project" value="MGI"/>
</dbReference>
<dbReference type="GO" id="GO:0007507">
    <property type="term" value="P:heart development"/>
    <property type="evidence" value="ECO:0000315"/>
    <property type="project" value="UniProtKB"/>
</dbReference>
<dbReference type="GO" id="GO:0072264">
    <property type="term" value="P:metanephric glomerular endothelium development"/>
    <property type="evidence" value="ECO:0000270"/>
    <property type="project" value="UniProtKB"/>
</dbReference>
<dbReference type="GO" id="GO:0072255">
    <property type="term" value="P:metanephric glomerular mesangial cell development"/>
    <property type="evidence" value="ECO:0000315"/>
    <property type="project" value="UniProtKB"/>
</dbReference>
<dbReference type="GO" id="GO:0072262">
    <property type="term" value="P:metanephric glomerular mesangial cell proliferation involved in metanephros development"/>
    <property type="evidence" value="ECO:0000315"/>
    <property type="project" value="UniProtKB"/>
</dbReference>
<dbReference type="GO" id="GO:0002548">
    <property type="term" value="P:monocyte chemotaxis"/>
    <property type="evidence" value="ECO:0000250"/>
    <property type="project" value="UniProtKB"/>
</dbReference>
<dbReference type="GO" id="GO:0010629">
    <property type="term" value="P:negative regulation of gene expression"/>
    <property type="evidence" value="ECO:0000250"/>
    <property type="project" value="UniProtKB"/>
</dbReference>
<dbReference type="GO" id="GO:0010512">
    <property type="term" value="P:negative regulation of phosphatidylinositol biosynthetic process"/>
    <property type="evidence" value="ECO:0000250"/>
    <property type="project" value="UniProtKB"/>
</dbReference>
<dbReference type="GO" id="GO:0010544">
    <property type="term" value="P:negative regulation of platelet activation"/>
    <property type="evidence" value="ECO:0000250"/>
    <property type="project" value="UniProtKB"/>
</dbReference>
<dbReference type="GO" id="GO:1904753">
    <property type="term" value="P:negative regulation of vascular associated smooth muscle cell migration"/>
    <property type="evidence" value="ECO:0000316"/>
    <property type="project" value="MGI"/>
</dbReference>
<dbReference type="GO" id="GO:0016322">
    <property type="term" value="P:neuron remodeling"/>
    <property type="evidence" value="ECO:0000315"/>
    <property type="project" value="MGI"/>
</dbReference>
<dbReference type="GO" id="GO:0038001">
    <property type="term" value="P:paracrine signaling"/>
    <property type="evidence" value="ECO:0000315"/>
    <property type="project" value="UniProtKB"/>
</dbReference>
<dbReference type="GO" id="GO:0018108">
    <property type="term" value="P:peptidyl-tyrosine phosphorylation"/>
    <property type="evidence" value="ECO:0000250"/>
    <property type="project" value="UniProtKB"/>
</dbReference>
<dbReference type="GO" id="GO:0043491">
    <property type="term" value="P:phosphatidylinositol 3-kinase/protein kinase B signal transduction"/>
    <property type="evidence" value="ECO:0000316"/>
    <property type="project" value="MGI"/>
</dbReference>
<dbReference type="GO" id="GO:0048008">
    <property type="term" value="P:platelet-derived growth factor receptor signaling pathway"/>
    <property type="evidence" value="ECO:0000250"/>
    <property type="project" value="UniProtKB"/>
</dbReference>
<dbReference type="GO" id="GO:0043536">
    <property type="term" value="P:positive regulation of blood vessel endothelial cell migration"/>
    <property type="evidence" value="ECO:0000250"/>
    <property type="project" value="UniProtKB"/>
</dbReference>
<dbReference type="GO" id="GO:0090280">
    <property type="term" value="P:positive regulation of calcium ion import"/>
    <property type="evidence" value="ECO:0000250"/>
    <property type="project" value="UniProtKB"/>
</dbReference>
<dbReference type="GO" id="GO:0051781">
    <property type="term" value="P:positive regulation of cell division"/>
    <property type="evidence" value="ECO:0007669"/>
    <property type="project" value="UniProtKB-KW"/>
</dbReference>
<dbReference type="GO" id="GO:0008284">
    <property type="term" value="P:positive regulation of cell population proliferation"/>
    <property type="evidence" value="ECO:0000250"/>
    <property type="project" value="UniProtKB"/>
</dbReference>
<dbReference type="GO" id="GO:0050921">
    <property type="term" value="P:positive regulation of chemotaxis"/>
    <property type="evidence" value="ECO:0000250"/>
    <property type="project" value="UniProtKB"/>
</dbReference>
<dbReference type="GO" id="GO:2000573">
    <property type="term" value="P:positive regulation of DNA biosynthetic process"/>
    <property type="evidence" value="ECO:0000250"/>
    <property type="project" value="UniProtKB"/>
</dbReference>
<dbReference type="GO" id="GO:0045893">
    <property type="term" value="P:positive regulation of DNA-templated transcription"/>
    <property type="evidence" value="ECO:0000250"/>
    <property type="project" value="UniProtKB"/>
</dbReference>
<dbReference type="GO" id="GO:0001938">
    <property type="term" value="P:positive regulation of endothelial cell proliferation"/>
    <property type="evidence" value="ECO:0000316"/>
    <property type="project" value="MGI"/>
</dbReference>
<dbReference type="GO" id="GO:0070374">
    <property type="term" value="P:positive regulation of ERK1 and ERK2 cascade"/>
    <property type="evidence" value="ECO:0000250"/>
    <property type="project" value="UniProtKB"/>
</dbReference>
<dbReference type="GO" id="GO:0045743">
    <property type="term" value="P:positive regulation of fibroblast growth factor receptor signaling pathway"/>
    <property type="evidence" value="ECO:0000314"/>
    <property type="project" value="MGI"/>
</dbReference>
<dbReference type="GO" id="GO:0010763">
    <property type="term" value="P:positive regulation of fibroblast migration"/>
    <property type="evidence" value="ECO:0000316"/>
    <property type="project" value="MGI"/>
</dbReference>
<dbReference type="GO" id="GO:0048146">
    <property type="term" value="P:positive regulation of fibroblast proliferation"/>
    <property type="evidence" value="ECO:0000250"/>
    <property type="project" value="UniProtKB"/>
</dbReference>
<dbReference type="GO" id="GO:0010628">
    <property type="term" value="P:positive regulation of gene expression"/>
    <property type="evidence" value="ECO:0000314"/>
    <property type="project" value="BHF-UCL"/>
</dbReference>
<dbReference type="GO" id="GO:0003104">
    <property type="term" value="P:positive regulation of glomerular filtration"/>
    <property type="evidence" value="ECO:0000315"/>
    <property type="project" value="UniProtKB"/>
</dbReference>
<dbReference type="GO" id="GO:0072126">
    <property type="term" value="P:positive regulation of glomerular mesangial cell proliferation"/>
    <property type="evidence" value="ECO:0000250"/>
    <property type="project" value="UniProtKB"/>
</dbReference>
<dbReference type="GO" id="GO:1900127">
    <property type="term" value="P:positive regulation of hyaluronan biosynthetic process"/>
    <property type="evidence" value="ECO:0000250"/>
    <property type="project" value="UniProtKB"/>
</dbReference>
<dbReference type="GO" id="GO:0043406">
    <property type="term" value="P:positive regulation of MAP kinase activity"/>
    <property type="evidence" value="ECO:0000250"/>
    <property type="project" value="UniProtKB"/>
</dbReference>
<dbReference type="GO" id="GO:0043410">
    <property type="term" value="P:positive regulation of MAPK cascade"/>
    <property type="evidence" value="ECO:0000250"/>
    <property type="project" value="UniProtKB"/>
</dbReference>
<dbReference type="GO" id="GO:0035793">
    <property type="term" value="P:positive regulation of metanephric mesenchymal cell migration by platelet-derived growth factor receptor-beta signaling pathway"/>
    <property type="evidence" value="ECO:0000250"/>
    <property type="project" value="UniProtKB"/>
</dbReference>
<dbReference type="GO" id="GO:0045977">
    <property type="term" value="P:positive regulation of mitotic cell cycle, embryonic"/>
    <property type="evidence" value="ECO:0000316"/>
    <property type="project" value="MGI"/>
</dbReference>
<dbReference type="GO" id="GO:0045840">
    <property type="term" value="P:positive regulation of mitotic nuclear division"/>
    <property type="evidence" value="ECO:0000250"/>
    <property type="project" value="UniProtKB"/>
</dbReference>
<dbReference type="GO" id="GO:0051897">
    <property type="term" value="P:positive regulation of phosphatidylinositol 3-kinase/protein kinase B signal transduction"/>
    <property type="evidence" value="ECO:0000316"/>
    <property type="project" value="MGI"/>
</dbReference>
<dbReference type="GO" id="GO:0031954">
    <property type="term" value="P:positive regulation of protein autophosphorylation"/>
    <property type="evidence" value="ECO:0000250"/>
    <property type="project" value="UniProtKB"/>
</dbReference>
<dbReference type="GO" id="GO:2000379">
    <property type="term" value="P:positive regulation of reactive oxygen species metabolic process"/>
    <property type="evidence" value="ECO:0000250"/>
    <property type="project" value="UniProtKB"/>
</dbReference>
<dbReference type="GO" id="GO:0014911">
    <property type="term" value="P:positive regulation of smooth muscle cell migration"/>
    <property type="evidence" value="ECO:0000315"/>
    <property type="project" value="UniProtKB"/>
</dbReference>
<dbReference type="GO" id="GO:0048661">
    <property type="term" value="P:positive regulation of smooth muscle cell proliferation"/>
    <property type="evidence" value="ECO:0000314"/>
    <property type="project" value="BHF-UCL"/>
</dbReference>
<dbReference type="GO" id="GO:1904707">
    <property type="term" value="P:positive regulation of vascular associated smooth muscle cell proliferation"/>
    <property type="evidence" value="ECO:0000316"/>
    <property type="project" value="MGI"/>
</dbReference>
<dbReference type="GO" id="GO:0045907">
    <property type="term" value="P:positive regulation of vasoconstriction"/>
    <property type="evidence" value="ECO:0000304"/>
    <property type="project" value="DFLAT"/>
</dbReference>
<dbReference type="GO" id="GO:0006468">
    <property type="term" value="P:protein phosphorylation"/>
    <property type="evidence" value="ECO:0000250"/>
    <property type="project" value="UniProtKB"/>
</dbReference>
<dbReference type="GO" id="GO:0072593">
    <property type="term" value="P:reactive oxygen species metabolic process"/>
    <property type="evidence" value="ECO:0000250"/>
    <property type="project" value="UniProtKB"/>
</dbReference>
<dbReference type="GO" id="GO:0009611">
    <property type="term" value="P:response to wounding"/>
    <property type="evidence" value="ECO:0000250"/>
    <property type="project" value="UniProtKB"/>
</dbReference>
<dbReference type="GO" id="GO:0060041">
    <property type="term" value="P:retina development in camera-type eye"/>
    <property type="evidence" value="ECO:0000315"/>
    <property type="project" value="MGI"/>
</dbReference>
<dbReference type="GO" id="GO:0061298">
    <property type="term" value="P:retina vasculature development in camera-type eye"/>
    <property type="evidence" value="ECO:0000315"/>
    <property type="project" value="MGI"/>
</dbReference>
<dbReference type="GO" id="GO:0006929">
    <property type="term" value="P:substrate-dependent cell migration"/>
    <property type="evidence" value="ECO:0000314"/>
    <property type="project" value="MGI"/>
</dbReference>
<dbReference type="GO" id="GO:0007416">
    <property type="term" value="P:synapse assembly"/>
    <property type="evidence" value="ECO:0000315"/>
    <property type="project" value="MGI"/>
</dbReference>
<dbReference type="GO" id="GO:1904738">
    <property type="term" value="P:vascular associated smooth muscle cell migration"/>
    <property type="evidence" value="ECO:0000316"/>
    <property type="project" value="MGI"/>
</dbReference>
<dbReference type="GO" id="GO:1990874">
    <property type="term" value="P:vascular associated smooth muscle cell proliferation"/>
    <property type="evidence" value="ECO:0000316"/>
    <property type="project" value="MGI"/>
</dbReference>
<dbReference type="GO" id="GO:0042310">
    <property type="term" value="P:vasoconstriction"/>
    <property type="evidence" value="ECO:0000304"/>
    <property type="project" value="DFLAT"/>
</dbReference>
<dbReference type="CDD" id="cd00135">
    <property type="entry name" value="PDGF"/>
    <property type="match status" value="1"/>
</dbReference>
<dbReference type="FunFam" id="2.10.90.10:FF:000023">
    <property type="entry name" value="Platelet-derived growth factor subunit B"/>
    <property type="match status" value="1"/>
</dbReference>
<dbReference type="Gene3D" id="2.10.90.10">
    <property type="entry name" value="Cystine-knot cytokines"/>
    <property type="match status" value="1"/>
</dbReference>
<dbReference type="InterPro" id="IPR029034">
    <property type="entry name" value="Cystine-knot_cytokine"/>
</dbReference>
<dbReference type="InterPro" id="IPR023581">
    <property type="entry name" value="PD_growth_factor_CS"/>
</dbReference>
<dbReference type="InterPro" id="IPR000072">
    <property type="entry name" value="PDGF/VEGF_dom"/>
</dbReference>
<dbReference type="InterPro" id="IPR006782">
    <property type="entry name" value="PDGF_N"/>
</dbReference>
<dbReference type="PANTHER" id="PTHR11633">
    <property type="entry name" value="PLATELET-DERIVED GROWTH FACTOR"/>
    <property type="match status" value="1"/>
</dbReference>
<dbReference type="PANTHER" id="PTHR11633:SF2">
    <property type="entry name" value="PLATELET-DERIVED GROWTH FACTOR SUBUNIT B"/>
    <property type="match status" value="1"/>
</dbReference>
<dbReference type="Pfam" id="PF00341">
    <property type="entry name" value="PDGF"/>
    <property type="match status" value="1"/>
</dbReference>
<dbReference type="Pfam" id="PF04692">
    <property type="entry name" value="PDGF_N"/>
    <property type="match status" value="1"/>
</dbReference>
<dbReference type="SMART" id="SM00141">
    <property type="entry name" value="PDGF"/>
    <property type="match status" value="1"/>
</dbReference>
<dbReference type="SUPFAM" id="SSF57501">
    <property type="entry name" value="Cystine-knot cytokines"/>
    <property type="match status" value="1"/>
</dbReference>
<dbReference type="PROSITE" id="PS00249">
    <property type="entry name" value="PDGF_1"/>
    <property type="match status" value="1"/>
</dbReference>
<dbReference type="PROSITE" id="PS50278">
    <property type="entry name" value="PDGF_2"/>
    <property type="match status" value="1"/>
</dbReference>
<proteinExistence type="evidence at transcript level"/>
<comment type="function">
    <text evidence="5 8 10 11">Growth factor that plays an essential role in the regulation of embryonic development, cell proliferation, cell migration, survival and chemotaxis. Potent mitogen for cells of mesenchymal origin. Required for normal proliferation and recruitment of pericytes and vascular smooth muscle cells in the central nervous system, skin, lung, heart and placenta. Required for normal blood vessel development, and for normal development of kidney glomeruli. Plays an important role in wound healing. Signaling is modulated by the formation of heterodimers with PDGFA.</text>
</comment>
<comment type="subunit">
    <text evidence="1 2">Antiparallel homodimer; disulfide-linked. Antiparallel heterodimer with PDGFA; disulfide-linked. The PDGFB homodimer interacts with PDGFRA and PDGFRB homodimers, and with heterodimers formed by PDGFRA and PDGFRB. The heterodimer composed of PDGFA and PDGFB interacts with PDGFRB homodimers, and with heterodimers formed by PDGFRA and PDGFRB. Interacts with XLKD1 (By similarity). Interacts with LRP1. Interacts with SORL1 (via the N-terminal ectodomain). Interacts with CD82; this interaction inhibits PDGFB-mediated signaling pathway (By similarity).</text>
</comment>
<comment type="subcellular location">
    <subcellularLocation>
        <location>Secreted</location>
    </subcellularLocation>
    <text evidence="1">Released by platelets upon wounding.</text>
</comment>
<comment type="tissue specificity">
    <text evidence="7">Localized to vascular smooth muscle cells. Also weakly expressed by cortical interstitial cells but absent in tubules. Up-regulated in areas of renal fibrosis. In mice with unilateral ureteral obstruction, an increased expression in interstitial cells and in some tubules observed after day 4.</text>
</comment>
<comment type="disruption phenotype">
    <text evidence="6 9 11 12">Perinatal lethality, due to severe hemorrhages shortly before birth. Kidney glomerular tufts do not form, apparently because of absence of mesangial cells. The heart and some large arteries are dilated in late-stage embryos. Mice lack microvascular pericytes, which normally form part of the capillary wall, and develop numerous capillary microaneurysms, leading to hemorrhages. Mice display erythroblastosis, macrocytic anemia, and thrombocytopenia.</text>
</comment>
<comment type="similarity">
    <text evidence="13">Belongs to the PDGF/VEGF growth factor family.</text>
</comment>
<sequence>MNRCWALFLPLCCYLRLVSAEGDPIPEELYEMLSDHSIRSFDDLQRLLHRDSVDEDGAELDLNMTRAHSGVELESSSRGRRSLGSLAAAEPAVIAECKTRTEVFQISRNLIDRTNANFLVWPPCVEVQRCSGCCNNRNVQCRASQVQMRPVQVRKIEIVRKKPIFKKATVTLEDHLACKCETIVTPRPVTRSPGTSREQRAKTPQARVTIRTVRIRRPPKGKHRKFKHTHDKAALKETLGA</sequence>